<accession>P58392</accession>
<protein>
    <recommendedName>
        <fullName evidence="5">Small conductance calcium-activated potassium channel protein 3</fullName>
        <shortName>SK3</shortName>
        <shortName>SKCa 3</shortName>
        <shortName>SKCa3</shortName>
    </recommendedName>
    <alternativeName>
        <fullName>KCa2.3</fullName>
    </alternativeName>
</protein>
<gene>
    <name evidence="5" type="primary">KCNN3</name>
</gene>
<reference key="1">
    <citation type="journal article" date="2002" name="Br. J. Pharmacol.">
        <title>Characterization of an apamin-sensitive small-conductance Ca(2+)-activated K(+) channel in porcine coronary artery endothelium: relevance to EDHF.</title>
        <authorList>
            <person name="Burnham M.P."/>
            <person name="Bychkov R."/>
            <person name="Feletou M."/>
            <person name="Richards G.R."/>
            <person name="Vanhoutte P.M."/>
            <person name="Weston A.H."/>
            <person name="Edwards G."/>
        </authorList>
    </citation>
    <scope>NUCLEOTIDE SEQUENCE [MRNA]</scope>
    <scope>FUNCTION</scope>
    <scope>TRANSPORTER ACTIVITY</scope>
    <scope>SUBCELLULAR LOCATION</scope>
    <scope>ACTIVITY REGULATION</scope>
    <source>
        <tissue>Coronary artery</tissue>
    </source>
</reference>
<evidence type="ECO:0000250" key="1"/>
<evidence type="ECO:0000250" key="2">
    <source>
        <dbReference type="UniProtKB" id="P58391"/>
    </source>
</evidence>
<evidence type="ECO:0000250" key="3">
    <source>
        <dbReference type="UniProtKB" id="P70604"/>
    </source>
</evidence>
<evidence type="ECO:0000250" key="4">
    <source>
        <dbReference type="UniProtKB" id="P70605"/>
    </source>
</evidence>
<evidence type="ECO:0000250" key="5">
    <source>
        <dbReference type="UniProtKB" id="Q9UGI6"/>
    </source>
</evidence>
<evidence type="ECO:0000255" key="6"/>
<evidence type="ECO:0000256" key="7">
    <source>
        <dbReference type="SAM" id="MobiDB-lite"/>
    </source>
</evidence>
<evidence type="ECO:0000269" key="8">
    <source>
    </source>
</evidence>
<evidence type="ECO:0000305" key="9"/>
<feature type="chain" id="PRO_0000155015" description="Small conductance calcium-activated potassium channel protein 3">
    <location>
        <begin position="1"/>
        <end position="724"/>
    </location>
</feature>
<feature type="transmembrane region" description="Helical; Name=Segment S1" evidence="6">
    <location>
        <begin position="281"/>
        <end position="301"/>
    </location>
</feature>
<feature type="transmembrane region" description="Helical; Name=Segment S2" evidence="6">
    <location>
        <begin position="308"/>
        <end position="328"/>
    </location>
</feature>
<feature type="transmembrane region" description="Helical; Name=Segment S3" evidence="6">
    <location>
        <begin position="359"/>
        <end position="379"/>
    </location>
</feature>
<feature type="transmembrane region" description="Helical; Name=Segment S4" evidence="6">
    <location>
        <begin position="398"/>
        <end position="418"/>
    </location>
</feature>
<feature type="transmembrane region" description="Helical; Name=Segment S5" evidence="6">
    <location>
        <begin position="447"/>
        <end position="467"/>
    </location>
</feature>
<feature type="intramembrane region" description="Pore-forming; Name=Segment H5" evidence="6">
    <location>
        <begin position="487"/>
        <end position="507"/>
    </location>
</feature>
<feature type="transmembrane region" description="Helical; Name=Segment S6" evidence="6">
    <location>
        <begin position="516"/>
        <end position="536"/>
    </location>
</feature>
<feature type="region of interest" description="Disordered" evidence="7">
    <location>
        <begin position="1"/>
        <end position="161"/>
    </location>
</feature>
<feature type="region of interest" description="Disordered" evidence="7">
    <location>
        <begin position="232"/>
        <end position="251"/>
    </location>
</feature>
<feature type="region of interest" description="Calmodulin-binding" evidence="1">
    <location>
        <begin position="554"/>
        <end position="630"/>
    </location>
</feature>
<feature type="region of interest" description="Disordered" evidence="7">
    <location>
        <begin position="702"/>
        <end position="724"/>
    </location>
</feature>
<feature type="coiled-coil region" evidence="6">
    <location>
        <begin position="635"/>
        <end position="662"/>
    </location>
</feature>
<feature type="compositionally biased region" description="Basic and acidic residues" evidence="7">
    <location>
        <begin position="1"/>
        <end position="11"/>
    </location>
</feature>
<feature type="compositionally biased region" description="Pro residues" evidence="7">
    <location>
        <begin position="34"/>
        <end position="58"/>
    </location>
</feature>
<feature type="compositionally biased region" description="Low complexity" evidence="7">
    <location>
        <begin position="59"/>
        <end position="88"/>
    </location>
</feature>
<feature type="compositionally biased region" description="Polar residues" evidence="7">
    <location>
        <begin position="105"/>
        <end position="125"/>
    </location>
</feature>
<feature type="compositionally biased region" description="Low complexity" evidence="7">
    <location>
        <begin position="131"/>
        <end position="140"/>
    </location>
</feature>
<feature type="compositionally biased region" description="Polar residues" evidence="7">
    <location>
        <begin position="232"/>
        <end position="249"/>
    </location>
</feature>
<feature type="compositionally biased region" description="Low complexity" evidence="7">
    <location>
        <begin position="710"/>
        <end position="724"/>
    </location>
</feature>
<feature type="modified residue" description="Phosphoserine" evidence="2">
    <location>
        <position position="160"/>
    </location>
</feature>
<dbReference type="EMBL" id="AY038049">
    <property type="protein sequence ID" value="AAK71498.1"/>
    <property type="molecule type" value="mRNA"/>
</dbReference>
<dbReference type="RefSeq" id="NP_999150.1">
    <property type="nucleotide sequence ID" value="NM_213985.1"/>
</dbReference>
<dbReference type="SMR" id="P58392"/>
<dbReference type="FunCoup" id="P58392">
    <property type="interactions" value="286"/>
</dbReference>
<dbReference type="STRING" id="9823.ENSSSCP00000006973"/>
<dbReference type="Ensembl" id="ENSSSCT00015072349.1">
    <property type="protein sequence ID" value="ENSSSCP00015029018.1"/>
    <property type="gene ID" value="ENSSSCG00015054109.1"/>
</dbReference>
<dbReference type="Ensembl" id="ENSSSCT00115035890">
    <property type="protein sequence ID" value="ENSSSCP00115034010"/>
    <property type="gene ID" value="ENSSSCG00115020258"/>
</dbReference>
<dbReference type="GeneID" id="397045"/>
<dbReference type="KEGG" id="ssc:397045"/>
<dbReference type="CTD" id="3782"/>
<dbReference type="InParanoid" id="P58392"/>
<dbReference type="OrthoDB" id="73653at2759"/>
<dbReference type="Reactome" id="R-SSC-1296052">
    <property type="pathway name" value="Ca2+ activated K+ channels"/>
</dbReference>
<dbReference type="Proteomes" id="UP000008227">
    <property type="component" value="Unplaced"/>
</dbReference>
<dbReference type="Proteomes" id="UP000314985">
    <property type="component" value="Unplaced"/>
</dbReference>
<dbReference type="Proteomes" id="UP000694570">
    <property type="component" value="Unplaced"/>
</dbReference>
<dbReference type="Proteomes" id="UP000694571">
    <property type="component" value="Unplaced"/>
</dbReference>
<dbReference type="Proteomes" id="UP000694720">
    <property type="component" value="Unplaced"/>
</dbReference>
<dbReference type="Proteomes" id="UP000694722">
    <property type="component" value="Unplaced"/>
</dbReference>
<dbReference type="Proteomes" id="UP000694723">
    <property type="component" value="Unplaced"/>
</dbReference>
<dbReference type="Proteomes" id="UP000694724">
    <property type="component" value="Unplaced"/>
</dbReference>
<dbReference type="Proteomes" id="UP000694725">
    <property type="component" value="Unplaced"/>
</dbReference>
<dbReference type="Proteomes" id="UP000694726">
    <property type="component" value="Unplaced"/>
</dbReference>
<dbReference type="Proteomes" id="UP000694727">
    <property type="component" value="Unplaced"/>
</dbReference>
<dbReference type="Proteomes" id="UP000694728">
    <property type="component" value="Unplaced"/>
</dbReference>
<dbReference type="GO" id="GO:0043005">
    <property type="term" value="C:neuron projection"/>
    <property type="evidence" value="ECO:0000318"/>
    <property type="project" value="GO_Central"/>
</dbReference>
<dbReference type="GO" id="GO:0043025">
    <property type="term" value="C:neuronal cell body"/>
    <property type="evidence" value="ECO:0000318"/>
    <property type="project" value="GO_Central"/>
</dbReference>
<dbReference type="GO" id="GO:0005886">
    <property type="term" value="C:plasma membrane"/>
    <property type="evidence" value="ECO:0000318"/>
    <property type="project" value="GO_Central"/>
</dbReference>
<dbReference type="GO" id="GO:0030018">
    <property type="term" value="C:Z disc"/>
    <property type="evidence" value="ECO:0007669"/>
    <property type="project" value="UniProtKB-SubCell"/>
</dbReference>
<dbReference type="GO" id="GO:0005516">
    <property type="term" value="F:calmodulin binding"/>
    <property type="evidence" value="ECO:0000318"/>
    <property type="project" value="GO_Central"/>
</dbReference>
<dbReference type="GO" id="GO:0016286">
    <property type="term" value="F:small conductance calcium-activated potassium channel activity"/>
    <property type="evidence" value="ECO:0000318"/>
    <property type="project" value="GO_Central"/>
</dbReference>
<dbReference type="GO" id="GO:0071805">
    <property type="term" value="P:potassium ion transmembrane transport"/>
    <property type="evidence" value="ECO:0000318"/>
    <property type="project" value="GO_Central"/>
</dbReference>
<dbReference type="FunFam" id="1.10.287.70:FF:000022">
    <property type="entry name" value="Small conductance calcium-activated potassium channel, isoform O"/>
    <property type="match status" value="1"/>
</dbReference>
<dbReference type="FunFam" id="1.10.287.70:FF:000027">
    <property type="entry name" value="Small conductance calcium-activated potassium channel, isoform O"/>
    <property type="match status" value="1"/>
</dbReference>
<dbReference type="Gene3D" id="1.10.287.70">
    <property type="match status" value="2"/>
</dbReference>
<dbReference type="InterPro" id="IPR004178">
    <property type="entry name" value="CaM-bd_dom"/>
</dbReference>
<dbReference type="InterPro" id="IPR036122">
    <property type="entry name" value="CaM-bd_dom_sf"/>
</dbReference>
<dbReference type="InterPro" id="IPR015449">
    <property type="entry name" value="K_chnl_Ca-activ_SK"/>
</dbReference>
<dbReference type="InterPro" id="IPR013099">
    <property type="entry name" value="K_chnl_dom"/>
</dbReference>
<dbReference type="PANTHER" id="PTHR10153">
    <property type="entry name" value="SMALL CONDUCTANCE CALCIUM-ACTIVATED POTASSIUM CHANNEL"/>
    <property type="match status" value="1"/>
</dbReference>
<dbReference type="Pfam" id="PF02888">
    <property type="entry name" value="CaMBD"/>
    <property type="match status" value="1"/>
</dbReference>
<dbReference type="Pfam" id="PF07885">
    <property type="entry name" value="Ion_trans_2"/>
    <property type="match status" value="1"/>
</dbReference>
<dbReference type="Pfam" id="PF03530">
    <property type="entry name" value="SK_channel"/>
    <property type="match status" value="1"/>
</dbReference>
<dbReference type="PRINTS" id="PR01451">
    <property type="entry name" value="SKCHANNEL"/>
</dbReference>
<dbReference type="SMART" id="SM01053">
    <property type="entry name" value="CaMBD"/>
    <property type="match status" value="1"/>
</dbReference>
<dbReference type="SUPFAM" id="SSF81327">
    <property type="entry name" value="Small-conductance potassium channel"/>
    <property type="match status" value="1"/>
</dbReference>
<dbReference type="SUPFAM" id="SSF81324">
    <property type="entry name" value="Voltage-gated potassium channels"/>
    <property type="match status" value="1"/>
</dbReference>
<comment type="function">
    <text evidence="4 5 8">Small conductance calcium-activated potassium channel that mediates the voltage-independent transmembrane transfer of potassium across the cell membrane through a constitutive interaction with calmodulin which binds the intracellular calcium allowing its opening (PubMed:11877319). The current is characterized by a voltage-independent activation, an intracellular calcium concentration increase-dependent activation and a single-channel conductance of 10 picosiemens (PubMed:11877319). Also presents an inwardly rectifying current, thus reducing its already small outward conductance of potassium ions, which is particularly the case when the membrane potential displays positive values, above + 20 mV (By similarity). Activation is followed by membrane hyperpolarization. Thought to regulate neuronal excitability by contributing to the slow component of synaptic afterhyperpolarization (By similarity).</text>
</comment>
<comment type="catalytic activity">
    <reaction evidence="8">
        <text>K(+)(in) = K(+)(out)</text>
        <dbReference type="Rhea" id="RHEA:29463"/>
        <dbReference type="ChEBI" id="CHEBI:29103"/>
    </reaction>
</comment>
<comment type="activity regulation">
    <text evidence="8">Inhibited by bee venom neurotoxin apamin.</text>
</comment>
<comment type="subunit">
    <text evidence="3 4 5">Homodimer (By similarity). Heteromultimer with KCNN2 or KCNN1; this modulates plasma membrane expression and consequently the small conductance calcium-activated potassium channel activity (By similarity). The complex is composed of 4 channel subunits each of which binds to a calmodulin subunit which regulates the channel activity through calcium-binding (By similarity). Interacts with CALM1 (By similarity).</text>
</comment>
<comment type="subcellular location">
    <subcellularLocation>
        <location evidence="8">Cell membrane</location>
        <topology evidence="6">Multi-pass membrane protein</topology>
    </subcellularLocation>
    <subcellularLocation>
        <location evidence="2">Cytoplasm</location>
        <location evidence="2">Myofibril</location>
        <location evidence="2">Sarcomere</location>
        <location evidence="2">Z line</location>
    </subcellularLocation>
</comment>
<comment type="domain">
    <text evidence="5">The coiled-coil domaim mediates heteromeic assembly.</text>
</comment>
<comment type="similarity">
    <text evidence="9">Belongs to the potassium channel KCNN family. KCa2.3/KCNN3 subfamily.</text>
</comment>
<proteinExistence type="evidence at transcript level"/>
<keyword id="KW-0112">Calmodulin-binding</keyword>
<keyword id="KW-1003">Cell membrane</keyword>
<keyword id="KW-0175">Coiled coil</keyword>
<keyword id="KW-0963">Cytoplasm</keyword>
<keyword id="KW-0407">Ion channel</keyword>
<keyword id="KW-0406">Ion transport</keyword>
<keyword id="KW-0472">Membrane</keyword>
<keyword id="KW-0597">Phosphoprotein</keyword>
<keyword id="KW-1185">Reference proteome</keyword>
<keyword id="KW-0812">Transmembrane</keyword>
<keyword id="KW-1133">Transmembrane helix</keyword>
<keyword id="KW-0813">Transport</keyword>
<sequence length="724" mass="80372">MDTSGHFHDSGVGDLDEDPKCPCPSSGDEQQQQQPPPPPPPPAPPAAPQQPPGPPLQPQPLQLQQQQQQQQQQPPHPLSQLAQLQSQPVHPGLLHSSPTAFRAPPSSNSTAILHPSSRQGSQLNLNDHLLGHSPSSTATSGPGGGGRHRQASPLVHRRDSNPFTEIAMSSCKYSGGVMKPLSRLSASRRNLIEAEPEGQPLQLFSPSNPPEIIISSREDNHAHQTLLHHPNATHNHQHAGTTASSTTFPKANKRKNQNIGYKLGHRRALFEKRKRLSDYALIFGMFGIVVMVIETELSWGLYSKDSMFSLALKCLISLSTIILLGLIIAYHTREVQLFVIDNGADDWRIAMTYERILYISLEMLVCAIHPIPGEYKFFWTARLAFSYTPSRAEADVDIILSIPMFLRLYLIARVMLLHSKLFTDASSRSIGALNKINFNTRFVMKTLMTICPGTVLLVFSISLWIIAAWTVRVCERYHDQQDVTSNFLGAMWLISITFLSIGYGDMVPHTYCGKGVCLLTGIMGAGCTALVVAVVARKLELTKAEKHVHNFMMDTQLTKRIKNAAANVLRETWLIYKHTKLLKKIDHAKVRKHQRKFLQAIHQLRSVKMEQRKLSDQANTLVDLSKMQNVMYDLITELNDRSEDLEKQIGSLESKLEHLTASFNSLPLLIADTLRQQQQQLLSALMEARGVSVAVGTTHTPLSDSPIGVSSTSFPTPYTSSSSC</sequence>
<organism>
    <name type="scientific">Sus scrofa</name>
    <name type="common">Pig</name>
    <dbReference type="NCBI Taxonomy" id="9823"/>
    <lineage>
        <taxon>Eukaryota</taxon>
        <taxon>Metazoa</taxon>
        <taxon>Chordata</taxon>
        <taxon>Craniata</taxon>
        <taxon>Vertebrata</taxon>
        <taxon>Euteleostomi</taxon>
        <taxon>Mammalia</taxon>
        <taxon>Eutheria</taxon>
        <taxon>Laurasiatheria</taxon>
        <taxon>Artiodactyla</taxon>
        <taxon>Suina</taxon>
        <taxon>Suidae</taxon>
        <taxon>Sus</taxon>
    </lineage>
</organism>
<name>KCNN3_PIG</name>